<protein>
    <recommendedName>
        <fullName evidence="1">Ribosomal protein L11 methyltransferase</fullName>
        <shortName evidence="1">L11 Mtase</shortName>
        <ecNumber evidence="1">2.1.1.-</ecNumber>
    </recommendedName>
</protein>
<gene>
    <name evidence="1" type="primary">prmA</name>
    <name type="ordered locus">MW1530</name>
</gene>
<name>PRMA_STAAW</name>
<evidence type="ECO:0000255" key="1">
    <source>
        <dbReference type="HAMAP-Rule" id="MF_00735"/>
    </source>
</evidence>
<evidence type="ECO:0000305" key="2"/>
<reference key="1">
    <citation type="journal article" date="2002" name="Lancet">
        <title>Genome and virulence determinants of high virulence community-acquired MRSA.</title>
        <authorList>
            <person name="Baba T."/>
            <person name="Takeuchi F."/>
            <person name="Kuroda M."/>
            <person name="Yuzawa H."/>
            <person name="Aoki K."/>
            <person name="Oguchi A."/>
            <person name="Nagai Y."/>
            <person name="Iwama N."/>
            <person name="Asano K."/>
            <person name="Naimi T."/>
            <person name="Kuroda H."/>
            <person name="Cui L."/>
            <person name="Yamamoto K."/>
            <person name="Hiramatsu K."/>
        </authorList>
    </citation>
    <scope>NUCLEOTIDE SEQUENCE [LARGE SCALE GENOMIC DNA]</scope>
    <source>
        <strain>MW2</strain>
    </source>
</reference>
<dbReference type="EC" id="2.1.1.-" evidence="1"/>
<dbReference type="EMBL" id="BA000033">
    <property type="protein sequence ID" value="BAB95395.1"/>
    <property type="molecule type" value="Genomic_DNA"/>
</dbReference>
<dbReference type="RefSeq" id="WP_001104611.1">
    <property type="nucleotide sequence ID" value="NC_003923.1"/>
</dbReference>
<dbReference type="SMR" id="Q8NWB0"/>
<dbReference type="KEGG" id="sam:MW1530"/>
<dbReference type="HOGENOM" id="CLU_049382_0_1_9"/>
<dbReference type="GO" id="GO:0005737">
    <property type="term" value="C:cytoplasm"/>
    <property type="evidence" value="ECO:0007669"/>
    <property type="project" value="UniProtKB-SubCell"/>
</dbReference>
<dbReference type="GO" id="GO:0016279">
    <property type="term" value="F:protein-lysine N-methyltransferase activity"/>
    <property type="evidence" value="ECO:0007669"/>
    <property type="project" value="RHEA"/>
</dbReference>
<dbReference type="GO" id="GO:0032259">
    <property type="term" value="P:methylation"/>
    <property type="evidence" value="ECO:0007669"/>
    <property type="project" value="UniProtKB-KW"/>
</dbReference>
<dbReference type="CDD" id="cd02440">
    <property type="entry name" value="AdoMet_MTases"/>
    <property type="match status" value="1"/>
</dbReference>
<dbReference type="Gene3D" id="3.40.50.150">
    <property type="entry name" value="Vaccinia Virus protein VP39"/>
    <property type="match status" value="1"/>
</dbReference>
<dbReference type="HAMAP" id="MF_00735">
    <property type="entry name" value="Methyltr_PrmA"/>
    <property type="match status" value="1"/>
</dbReference>
<dbReference type="InterPro" id="IPR050078">
    <property type="entry name" value="Ribosomal_L11_MeTrfase_PrmA"/>
</dbReference>
<dbReference type="InterPro" id="IPR004498">
    <property type="entry name" value="Ribosomal_PrmA_MeTrfase"/>
</dbReference>
<dbReference type="InterPro" id="IPR029063">
    <property type="entry name" value="SAM-dependent_MTases_sf"/>
</dbReference>
<dbReference type="NCBIfam" id="TIGR00406">
    <property type="entry name" value="prmA"/>
    <property type="match status" value="1"/>
</dbReference>
<dbReference type="PANTHER" id="PTHR43648">
    <property type="entry name" value="ELECTRON TRANSFER FLAVOPROTEIN BETA SUBUNIT LYSINE METHYLTRANSFERASE"/>
    <property type="match status" value="1"/>
</dbReference>
<dbReference type="PANTHER" id="PTHR43648:SF1">
    <property type="entry name" value="ELECTRON TRANSFER FLAVOPROTEIN BETA SUBUNIT LYSINE METHYLTRANSFERASE"/>
    <property type="match status" value="1"/>
</dbReference>
<dbReference type="Pfam" id="PF06325">
    <property type="entry name" value="PrmA"/>
    <property type="match status" value="1"/>
</dbReference>
<dbReference type="PIRSF" id="PIRSF000401">
    <property type="entry name" value="RPL11_MTase"/>
    <property type="match status" value="1"/>
</dbReference>
<dbReference type="SUPFAM" id="SSF53335">
    <property type="entry name" value="S-adenosyl-L-methionine-dependent methyltransferases"/>
    <property type="match status" value="1"/>
</dbReference>
<accession>Q8NWB0</accession>
<feature type="chain" id="PRO_0000192308" description="Ribosomal protein L11 methyltransferase">
    <location>
        <begin position="1"/>
        <end position="312"/>
    </location>
</feature>
<feature type="binding site" evidence="1">
    <location>
        <position position="160"/>
    </location>
    <ligand>
        <name>S-adenosyl-L-methionine</name>
        <dbReference type="ChEBI" id="CHEBI:59789"/>
    </ligand>
</feature>
<feature type="binding site" evidence="1">
    <location>
        <position position="181"/>
    </location>
    <ligand>
        <name>S-adenosyl-L-methionine</name>
        <dbReference type="ChEBI" id="CHEBI:59789"/>
    </ligand>
</feature>
<feature type="binding site" evidence="1">
    <location>
        <position position="203"/>
    </location>
    <ligand>
        <name>S-adenosyl-L-methionine</name>
        <dbReference type="ChEBI" id="CHEBI:59789"/>
    </ligand>
</feature>
<feature type="binding site" evidence="1">
    <location>
        <position position="246"/>
    </location>
    <ligand>
        <name>S-adenosyl-L-methionine</name>
        <dbReference type="ChEBI" id="CHEBI:59789"/>
    </ligand>
</feature>
<organism>
    <name type="scientific">Staphylococcus aureus (strain MW2)</name>
    <dbReference type="NCBI Taxonomy" id="196620"/>
    <lineage>
        <taxon>Bacteria</taxon>
        <taxon>Bacillati</taxon>
        <taxon>Bacillota</taxon>
        <taxon>Bacilli</taxon>
        <taxon>Bacillales</taxon>
        <taxon>Staphylococcaceae</taxon>
        <taxon>Staphylococcus</taxon>
    </lineage>
</organism>
<proteinExistence type="inferred from homology"/>
<keyword id="KW-0963">Cytoplasm</keyword>
<keyword id="KW-0489">Methyltransferase</keyword>
<keyword id="KW-0949">S-adenosyl-L-methionine</keyword>
<keyword id="KW-0808">Transferase</keyword>
<comment type="function">
    <text evidence="1">Methylates ribosomal protein L11.</text>
</comment>
<comment type="catalytic activity">
    <reaction evidence="1">
        <text>L-lysyl-[protein] + 3 S-adenosyl-L-methionine = N(6),N(6),N(6)-trimethyl-L-lysyl-[protein] + 3 S-adenosyl-L-homocysteine + 3 H(+)</text>
        <dbReference type="Rhea" id="RHEA:54192"/>
        <dbReference type="Rhea" id="RHEA-COMP:9752"/>
        <dbReference type="Rhea" id="RHEA-COMP:13826"/>
        <dbReference type="ChEBI" id="CHEBI:15378"/>
        <dbReference type="ChEBI" id="CHEBI:29969"/>
        <dbReference type="ChEBI" id="CHEBI:57856"/>
        <dbReference type="ChEBI" id="CHEBI:59789"/>
        <dbReference type="ChEBI" id="CHEBI:61961"/>
    </reaction>
</comment>
<comment type="subcellular location">
    <subcellularLocation>
        <location evidence="1">Cytoplasm</location>
    </subcellularLocation>
</comment>
<comment type="similarity">
    <text evidence="1 2">Belongs to the methyltransferase superfamily. PrmA family.</text>
</comment>
<sequence length="312" mass="35513">MNWTELSIIINHEAVELATNILENHGSNGVVIEDSDDLINQPEDKYGEIYALKKEDYPDKGVRLKAYFNEMTYDDKLRQQIKDELLNLDELDQHNVQFSEQIIAETDWENEWKNYFHPFRASKKFTIVPSWETYAKEADEELCIELDPGMAFGTGDHPTTSMCLKAIETYVLPQHSVIDVGTGSGILSIASHLIGVKRIKALDIDEMAVSVAKENFRRNHCETLIEAVPGNLLKDETEKFDIVIANILAHIIDEMIEDAYNTLNEGGYFITSGIIKEKYEGIQSHMERVGFKIISEQHDNGWVCLVGQKVSE</sequence>